<dbReference type="EMBL" id="AF143681">
    <property type="protein sequence ID" value="AAD30555.1"/>
    <property type="molecule type" value="mRNA"/>
</dbReference>
<dbReference type="RefSeq" id="NP_001105618.1">
    <property type="nucleotide sequence ID" value="NM_001112148.1"/>
</dbReference>
<dbReference type="SMR" id="Q9XFH3"/>
<dbReference type="FunCoup" id="Q9XFH3">
    <property type="interactions" value="1923"/>
</dbReference>
<dbReference type="STRING" id="4577.Q9XFH3"/>
<dbReference type="PaxDb" id="4577-GRMZM2G047143_P01"/>
<dbReference type="ProMEX" id="Q9XFH3"/>
<dbReference type="GeneID" id="542621"/>
<dbReference type="KEGG" id="zma:542621"/>
<dbReference type="eggNOG" id="KOG3285">
    <property type="taxonomic scope" value="Eukaryota"/>
</dbReference>
<dbReference type="HOGENOM" id="CLU_072097_0_0_1"/>
<dbReference type="InParanoid" id="Q9XFH3"/>
<dbReference type="OMA" id="WQFDVEI"/>
<dbReference type="OrthoDB" id="1806at2759"/>
<dbReference type="Proteomes" id="UP000007305">
    <property type="component" value="Unplaced"/>
</dbReference>
<dbReference type="ExpressionAtlas" id="Q9XFH3">
    <property type="expression patterns" value="baseline and differential"/>
</dbReference>
<dbReference type="GO" id="GO:0005737">
    <property type="term" value="C:cytoplasm"/>
    <property type="evidence" value="ECO:0000318"/>
    <property type="project" value="GO_Central"/>
</dbReference>
<dbReference type="GO" id="GO:0000776">
    <property type="term" value="C:kinetochore"/>
    <property type="evidence" value="ECO:0000318"/>
    <property type="project" value="GO_Central"/>
</dbReference>
<dbReference type="GO" id="GO:0005654">
    <property type="term" value="C:nucleoplasm"/>
    <property type="evidence" value="ECO:0000318"/>
    <property type="project" value="GO_Central"/>
</dbReference>
<dbReference type="GO" id="GO:0051301">
    <property type="term" value="P:cell division"/>
    <property type="evidence" value="ECO:0007669"/>
    <property type="project" value="UniProtKB-KW"/>
</dbReference>
<dbReference type="GO" id="GO:0007094">
    <property type="term" value="P:mitotic spindle assembly checkpoint signaling"/>
    <property type="evidence" value="ECO:0000318"/>
    <property type="project" value="GO_Central"/>
</dbReference>
<dbReference type="FunFam" id="3.30.900.10:FF:000004">
    <property type="entry name" value="Mitotic spindle checkpoint protein MAD2"/>
    <property type="match status" value="1"/>
</dbReference>
<dbReference type="Gene3D" id="3.30.900.10">
    <property type="entry name" value="HORMA domain"/>
    <property type="match status" value="1"/>
</dbReference>
<dbReference type="InterPro" id="IPR003511">
    <property type="entry name" value="HORMA_dom"/>
</dbReference>
<dbReference type="InterPro" id="IPR036570">
    <property type="entry name" value="HORMA_dom_sf"/>
</dbReference>
<dbReference type="InterPro" id="IPR045091">
    <property type="entry name" value="Mad2-like"/>
</dbReference>
<dbReference type="PANTHER" id="PTHR11842">
    <property type="entry name" value="MITOTIC SPINDLE ASSEMBLY CHECKPOINT PROTEIN MAD2"/>
    <property type="match status" value="1"/>
</dbReference>
<dbReference type="PANTHER" id="PTHR11842:SF11">
    <property type="entry name" value="MITOTIC SPINDLE ASSEMBLY CHECKPOINT PROTEIN MAD2A"/>
    <property type="match status" value="1"/>
</dbReference>
<dbReference type="Pfam" id="PF02301">
    <property type="entry name" value="HORMA"/>
    <property type="match status" value="1"/>
</dbReference>
<dbReference type="SUPFAM" id="SSF56019">
    <property type="entry name" value="The spindle assembly checkpoint protein mad2"/>
    <property type="match status" value="1"/>
</dbReference>
<dbReference type="PROSITE" id="PS50815">
    <property type="entry name" value="HORMA"/>
    <property type="match status" value="1"/>
</dbReference>
<accession>Q9XFH3</accession>
<protein>
    <recommendedName>
        <fullName>Mitotic spindle checkpoint protein MAD2</fullName>
    </recommendedName>
</protein>
<organism>
    <name type="scientific">Zea mays</name>
    <name type="common">Maize</name>
    <dbReference type="NCBI Taxonomy" id="4577"/>
    <lineage>
        <taxon>Eukaryota</taxon>
        <taxon>Viridiplantae</taxon>
        <taxon>Streptophyta</taxon>
        <taxon>Embryophyta</taxon>
        <taxon>Tracheophyta</taxon>
        <taxon>Spermatophyta</taxon>
        <taxon>Magnoliopsida</taxon>
        <taxon>Liliopsida</taxon>
        <taxon>Poales</taxon>
        <taxon>Poaceae</taxon>
        <taxon>PACMAD clade</taxon>
        <taxon>Panicoideae</taxon>
        <taxon>Andropogonodae</taxon>
        <taxon>Andropogoneae</taxon>
        <taxon>Tripsacinae</taxon>
        <taxon>Zea</taxon>
    </lineage>
</organism>
<name>MAD2_MAIZE</name>
<feature type="chain" id="PRO_0000126122" description="Mitotic spindle checkpoint protein MAD2">
    <location>
        <begin position="1"/>
        <end position="208"/>
    </location>
</feature>
<feature type="domain" description="HORMA" evidence="2">
    <location>
        <begin position="14"/>
        <end position="197"/>
    </location>
</feature>
<proteinExistence type="evidence at transcript level"/>
<reference key="1">
    <citation type="journal article" date="1999" name="J. Cell Biol.">
        <title>The maize homologue of the cell cycle checkpoint protein MAD2 reveals kinetochore substructure and contrasting mitotic and meiotic localization patterns.</title>
        <authorList>
            <person name="Yu H.-G."/>
            <person name="Muszynski M.G."/>
            <person name="Dawe R.K."/>
        </authorList>
    </citation>
    <scope>NUCLEOTIDE SEQUENCE [MRNA]</scope>
</reference>
<comment type="function">
    <text evidence="1">Required for the execution of the mitotic checkpoint which monitors the process of kinetochore-spindle attachment and delays the onset of anaphase when this process is not complete. It inhibits the activity of the anaphase promoting complex by sequestering CDC20 until all chromosomes are aligned at the metaphase plate (By similarity).</text>
</comment>
<comment type="subcellular location">
    <subcellularLocation>
        <location evidence="3">Nucleus</location>
    </subcellularLocation>
</comment>
<comment type="similarity">
    <text evidence="3">Belongs to the MAD2 family.</text>
</comment>
<keyword id="KW-0131">Cell cycle</keyword>
<keyword id="KW-0132">Cell division</keyword>
<keyword id="KW-0498">Mitosis</keyword>
<keyword id="KW-0539">Nucleus</keyword>
<keyword id="KW-1185">Reference proteome</keyword>
<sequence>MASRSASKDIITLRGSAAIVSEFFGYAANSILYNRAVYPEESFSKVKKYGLTMLLTQDEGVKNFIASLTSQLSEWLEAGKLQRIVLVIMSKATSEVLERWNFNIVTDAEVVEKGAIKEKSDKEIMREIQAIMRQIASCITYLPCLDEPCVFDVLAYTDTDVDAPGTWVESDAKLIDNPQMVKLHSFDTKIHKVDTLVSYKKDEWDEEE</sequence>
<evidence type="ECO:0000250" key="1"/>
<evidence type="ECO:0000255" key="2">
    <source>
        <dbReference type="PROSITE-ProRule" id="PRU00109"/>
    </source>
</evidence>
<evidence type="ECO:0000305" key="3"/>
<gene>
    <name type="primary">MAD2</name>
</gene>